<sequence>MGAYRYVQELYRKKQSDVLRYLLRVRCWQYRQLTKLHRAPRPSRPDKARRLGYKAKQGFLIYRIRVRRGGRKRPVHKGCTYGKPKSHGVNQLKPYRNLQSVAEERVGRRMGGLRVLNSYWVAQDAAFKYYEVICVDPFHNAVRRDPKVNWVCNAVHKHRELRGLTSAGKSSRGVGKGYRYSQTIGGSRRAAWRRKNRLHLRRYR</sequence>
<proteinExistence type="inferred from homology"/>
<comment type="similarity">
    <text evidence="2">Belongs to the eukaryotic ribosomal protein eL15 family.</text>
</comment>
<evidence type="ECO:0000250" key="1"/>
<evidence type="ECO:0000305" key="2"/>
<organism>
    <name type="scientific">Chironomus tentans</name>
    <name type="common">Midge</name>
    <name type="synonym">Camptochironomus tentans</name>
    <dbReference type="NCBI Taxonomy" id="7153"/>
    <lineage>
        <taxon>Eukaryota</taxon>
        <taxon>Metazoa</taxon>
        <taxon>Ecdysozoa</taxon>
        <taxon>Arthropoda</taxon>
        <taxon>Hexapoda</taxon>
        <taxon>Insecta</taxon>
        <taxon>Pterygota</taxon>
        <taxon>Neoptera</taxon>
        <taxon>Endopterygota</taxon>
        <taxon>Diptera</taxon>
        <taxon>Nematocera</taxon>
        <taxon>Chironomoidea</taxon>
        <taxon>Chironomidae</taxon>
        <taxon>Chironominae</taxon>
        <taxon>Chironomus</taxon>
    </lineage>
</organism>
<dbReference type="EMBL" id="X68332">
    <property type="protein sequence ID" value="CAA48409.1"/>
    <property type="molecule type" value="Genomic_DNA"/>
</dbReference>
<dbReference type="PIR" id="S26380">
    <property type="entry name" value="S26380"/>
</dbReference>
<dbReference type="SMR" id="P30736"/>
<dbReference type="GO" id="GO:0022625">
    <property type="term" value="C:cytosolic large ribosomal subunit"/>
    <property type="evidence" value="ECO:0007669"/>
    <property type="project" value="TreeGrafter"/>
</dbReference>
<dbReference type="GO" id="GO:0003723">
    <property type="term" value="F:RNA binding"/>
    <property type="evidence" value="ECO:0007669"/>
    <property type="project" value="TreeGrafter"/>
</dbReference>
<dbReference type="GO" id="GO:0003735">
    <property type="term" value="F:structural constituent of ribosome"/>
    <property type="evidence" value="ECO:0007669"/>
    <property type="project" value="InterPro"/>
</dbReference>
<dbReference type="GO" id="GO:0002181">
    <property type="term" value="P:cytoplasmic translation"/>
    <property type="evidence" value="ECO:0007669"/>
    <property type="project" value="TreeGrafter"/>
</dbReference>
<dbReference type="FunFam" id="3.40.1120.10:FF:000001">
    <property type="entry name" value="Ribosomal protein L15"/>
    <property type="match status" value="1"/>
</dbReference>
<dbReference type="Gene3D" id="3.40.1120.10">
    <property type="entry name" value="Ribosomal protein l15e"/>
    <property type="match status" value="1"/>
</dbReference>
<dbReference type="InterPro" id="IPR024794">
    <property type="entry name" value="Rbsml_eL15_core_dom_sf"/>
</dbReference>
<dbReference type="InterPro" id="IPR000439">
    <property type="entry name" value="Ribosomal_eL15"/>
</dbReference>
<dbReference type="InterPro" id="IPR020925">
    <property type="entry name" value="Ribosomal_eL15_CS"/>
</dbReference>
<dbReference type="InterPro" id="IPR012678">
    <property type="entry name" value="Ribosomal_uL23/eL15/eS24_sf"/>
</dbReference>
<dbReference type="NCBIfam" id="NF003269">
    <property type="entry name" value="PRK04243.1"/>
    <property type="match status" value="1"/>
</dbReference>
<dbReference type="PANTHER" id="PTHR11847:SF4">
    <property type="entry name" value="LARGE RIBOSOMAL SUBUNIT PROTEIN EL15"/>
    <property type="match status" value="1"/>
</dbReference>
<dbReference type="PANTHER" id="PTHR11847">
    <property type="entry name" value="RIBOSOMAL PROTEIN L15"/>
    <property type="match status" value="1"/>
</dbReference>
<dbReference type="Pfam" id="PF00827">
    <property type="entry name" value="Ribosomal_L15e"/>
    <property type="match status" value="1"/>
</dbReference>
<dbReference type="SMART" id="SM01384">
    <property type="entry name" value="Ribosomal_L15e"/>
    <property type="match status" value="1"/>
</dbReference>
<dbReference type="SUPFAM" id="SSF54189">
    <property type="entry name" value="Ribosomal proteins S24e, L23 and L15e"/>
    <property type="match status" value="1"/>
</dbReference>
<dbReference type="PROSITE" id="PS01194">
    <property type="entry name" value="RIBOSOMAL_L15E"/>
    <property type="match status" value="1"/>
</dbReference>
<reference key="1">
    <citation type="journal article" date="1992" name="Nucleic Acids Res.">
        <title>Structure of a gene in the dipteran Chironomus tentans encoding a yeast ribosomal YL10 protein homologue.</title>
        <authorList>
            <person name="Galli J."/>
            <person name="Wieslander L."/>
        </authorList>
    </citation>
    <scope>NUCLEOTIDE SEQUENCE [GENOMIC DNA]</scope>
</reference>
<keyword id="KW-0687">Ribonucleoprotein</keyword>
<keyword id="KW-0689">Ribosomal protein</keyword>
<protein>
    <recommendedName>
        <fullName evidence="2">Large ribosomal subunit protein eL15</fullName>
    </recommendedName>
    <alternativeName>
        <fullName>60S ribosomal protein L15</fullName>
    </alternativeName>
    <alternativeName>
        <fullName>YL10</fullName>
    </alternativeName>
</protein>
<feature type="initiator methionine" description="Removed" evidence="1">
    <location>
        <position position="1"/>
    </location>
</feature>
<feature type="chain" id="PRO_0000127554" description="Large ribosomal subunit protein eL15">
    <location>
        <begin position="2"/>
        <end position="204"/>
    </location>
</feature>
<name>RL15_CHITE</name>
<accession>P30736</accession>
<gene>
    <name type="primary">RpL15</name>
</gene>